<comment type="function">
    <text evidence="1">Catalyzes the hydrolytic cleavage of the carbon-nitrogen bond in imidazolone-5-propanoate to yield N-formimidoyl-L-glutamate. It is the third step in the universal histidine degradation pathway.</text>
</comment>
<comment type="catalytic activity">
    <reaction evidence="1">
        <text>4-imidazolone-5-propanoate + H2O = N-formimidoyl-L-glutamate</text>
        <dbReference type="Rhea" id="RHEA:23660"/>
        <dbReference type="ChEBI" id="CHEBI:15377"/>
        <dbReference type="ChEBI" id="CHEBI:58928"/>
        <dbReference type="ChEBI" id="CHEBI:77893"/>
        <dbReference type="EC" id="3.5.2.7"/>
    </reaction>
</comment>
<comment type="cofactor">
    <cofactor evidence="1">
        <name>Zn(2+)</name>
        <dbReference type="ChEBI" id="CHEBI:29105"/>
    </cofactor>
    <cofactor evidence="1">
        <name>Fe(3+)</name>
        <dbReference type="ChEBI" id="CHEBI:29034"/>
    </cofactor>
    <text evidence="1">Binds 1 zinc or iron ion per subunit.</text>
</comment>
<comment type="pathway">
    <text evidence="1">Amino-acid degradation; L-histidine degradation into L-glutamate; N-formimidoyl-L-glutamate from L-histidine: step 3/3.</text>
</comment>
<comment type="subcellular location">
    <subcellularLocation>
        <location evidence="1">Cytoplasm</location>
    </subcellularLocation>
</comment>
<comment type="similarity">
    <text evidence="1">Belongs to the metallo-dependent hydrolases superfamily. HutI family.</text>
</comment>
<sequence>MTLPSVSSAPSADGVWHNCHLLPDADPAHAIRDAALVVEHGRIAWLGATADLPDAYRGAARHDAHGAWITPGLVDCHTHLVYGGQRADEFAMRLAGAGYEEIARAGGGIVSTVRATRAADEDTLFAQAAARLQPLLAEGVTAIEIKSGYGLSLEAERKQLRVARRLGEHFGISVYTTFLGAHALPPEYAGRADDYIDLVCNTMLPALAGEGLVDAVDAFCESIGFSIAQTGRVFEAAARHGVRVKLHAEQLSNLGGAALAARHRALSADHLEHLDEAGVAAMAEAGTVAVLLPGAYYFLRDTNLPPIALLRQYGVPMAISTDHNPGTSPVTSLLLMMNMACTLFRLTVPEALAGVTVHAARALGASDRHGRLEAGRVADFALWRIDSPAELAYWFGRNPVATVVRQGRVHAHEGASA</sequence>
<organism>
    <name type="scientific">Cupriavidus necator (strain ATCC 17699 / DSM 428 / KCTC 22496 / NCIMB 10442 / H16 / Stanier 337)</name>
    <name type="common">Ralstonia eutropha</name>
    <dbReference type="NCBI Taxonomy" id="381666"/>
    <lineage>
        <taxon>Bacteria</taxon>
        <taxon>Pseudomonadati</taxon>
        <taxon>Pseudomonadota</taxon>
        <taxon>Betaproteobacteria</taxon>
        <taxon>Burkholderiales</taxon>
        <taxon>Burkholderiaceae</taxon>
        <taxon>Cupriavidus</taxon>
    </lineage>
</organism>
<feature type="chain" id="PRO_0000306494" description="Imidazolonepropionase">
    <location>
        <begin position="1"/>
        <end position="417"/>
    </location>
</feature>
<feature type="binding site" evidence="1">
    <location>
        <position position="77"/>
    </location>
    <ligand>
        <name>Fe(3+)</name>
        <dbReference type="ChEBI" id="CHEBI:29034"/>
    </ligand>
</feature>
<feature type="binding site" evidence="1">
    <location>
        <position position="77"/>
    </location>
    <ligand>
        <name>Zn(2+)</name>
        <dbReference type="ChEBI" id="CHEBI:29105"/>
    </ligand>
</feature>
<feature type="binding site" evidence="1">
    <location>
        <position position="79"/>
    </location>
    <ligand>
        <name>Fe(3+)</name>
        <dbReference type="ChEBI" id="CHEBI:29034"/>
    </ligand>
</feature>
<feature type="binding site" evidence="1">
    <location>
        <position position="79"/>
    </location>
    <ligand>
        <name>Zn(2+)</name>
        <dbReference type="ChEBI" id="CHEBI:29105"/>
    </ligand>
</feature>
<feature type="binding site" evidence="1">
    <location>
        <position position="86"/>
    </location>
    <ligand>
        <name>4-imidazolone-5-propanoate</name>
        <dbReference type="ChEBI" id="CHEBI:77893"/>
    </ligand>
</feature>
<feature type="binding site" evidence="1">
    <location>
        <position position="149"/>
    </location>
    <ligand>
        <name>4-imidazolone-5-propanoate</name>
        <dbReference type="ChEBI" id="CHEBI:77893"/>
    </ligand>
</feature>
<feature type="binding site" evidence="1">
    <location>
        <position position="149"/>
    </location>
    <ligand>
        <name>N-formimidoyl-L-glutamate</name>
        <dbReference type="ChEBI" id="CHEBI:58928"/>
    </ligand>
</feature>
<feature type="binding site" evidence="1">
    <location>
        <position position="182"/>
    </location>
    <ligand>
        <name>4-imidazolone-5-propanoate</name>
        <dbReference type="ChEBI" id="CHEBI:77893"/>
    </ligand>
</feature>
<feature type="binding site" evidence="1">
    <location>
        <position position="247"/>
    </location>
    <ligand>
        <name>Fe(3+)</name>
        <dbReference type="ChEBI" id="CHEBI:29034"/>
    </ligand>
</feature>
<feature type="binding site" evidence="1">
    <location>
        <position position="247"/>
    </location>
    <ligand>
        <name>Zn(2+)</name>
        <dbReference type="ChEBI" id="CHEBI:29105"/>
    </ligand>
</feature>
<feature type="binding site" evidence="1">
    <location>
        <position position="250"/>
    </location>
    <ligand>
        <name>4-imidazolone-5-propanoate</name>
        <dbReference type="ChEBI" id="CHEBI:77893"/>
    </ligand>
</feature>
<feature type="binding site" evidence="1">
    <location>
        <position position="322"/>
    </location>
    <ligand>
        <name>Fe(3+)</name>
        <dbReference type="ChEBI" id="CHEBI:29034"/>
    </ligand>
</feature>
<feature type="binding site" evidence="1">
    <location>
        <position position="322"/>
    </location>
    <ligand>
        <name>Zn(2+)</name>
        <dbReference type="ChEBI" id="CHEBI:29105"/>
    </ligand>
</feature>
<feature type="binding site" evidence="1">
    <location>
        <position position="324"/>
    </location>
    <ligand>
        <name>N-formimidoyl-L-glutamate</name>
        <dbReference type="ChEBI" id="CHEBI:58928"/>
    </ligand>
</feature>
<feature type="binding site" evidence="1">
    <location>
        <position position="326"/>
    </location>
    <ligand>
        <name>N-formimidoyl-L-glutamate</name>
        <dbReference type="ChEBI" id="CHEBI:58928"/>
    </ligand>
</feature>
<feature type="binding site" evidence="1">
    <location>
        <position position="327"/>
    </location>
    <ligand>
        <name>4-imidazolone-5-propanoate</name>
        <dbReference type="ChEBI" id="CHEBI:77893"/>
    </ligand>
</feature>
<name>HUTI_CUPNH</name>
<reference key="1">
    <citation type="journal article" date="2006" name="Nat. Biotechnol.">
        <title>Genome sequence of the bioplastic-producing 'Knallgas' bacterium Ralstonia eutropha H16.</title>
        <authorList>
            <person name="Pohlmann A."/>
            <person name="Fricke W.F."/>
            <person name="Reinecke F."/>
            <person name="Kusian B."/>
            <person name="Liesegang H."/>
            <person name="Cramm R."/>
            <person name="Eitinger T."/>
            <person name="Ewering C."/>
            <person name="Poetter M."/>
            <person name="Schwartz E."/>
            <person name="Strittmatter A."/>
            <person name="Voss I."/>
            <person name="Gottschalk G."/>
            <person name="Steinbuechel A."/>
            <person name="Friedrich B."/>
            <person name="Bowien B."/>
        </authorList>
    </citation>
    <scope>NUCLEOTIDE SEQUENCE [LARGE SCALE GENOMIC DNA]</scope>
    <source>
        <strain>ATCC 17699 / DSM 428 / KCTC 22496 / NCIMB 10442 / H16 / Stanier 337</strain>
    </source>
</reference>
<dbReference type="EC" id="3.5.2.7" evidence="1"/>
<dbReference type="EMBL" id="AM260479">
    <property type="protein sequence ID" value="CAJ94090.1"/>
    <property type="molecule type" value="Genomic_DNA"/>
</dbReference>
<dbReference type="RefSeq" id="WP_011615957.1">
    <property type="nucleotide sequence ID" value="NC_008313.1"/>
</dbReference>
<dbReference type="SMR" id="Q0K7D1"/>
<dbReference type="STRING" id="381666.H16_A3015"/>
<dbReference type="KEGG" id="reh:H16_A3015"/>
<dbReference type="PATRIC" id="fig|381666.6.peg.3414"/>
<dbReference type="eggNOG" id="COG1228">
    <property type="taxonomic scope" value="Bacteria"/>
</dbReference>
<dbReference type="HOGENOM" id="CLU_041647_0_0_4"/>
<dbReference type="OrthoDB" id="9776455at2"/>
<dbReference type="UniPathway" id="UPA00379">
    <property type="reaction ID" value="UER00551"/>
</dbReference>
<dbReference type="Proteomes" id="UP000008210">
    <property type="component" value="Chromosome 1"/>
</dbReference>
<dbReference type="GO" id="GO:0005737">
    <property type="term" value="C:cytoplasm"/>
    <property type="evidence" value="ECO:0007669"/>
    <property type="project" value="UniProtKB-SubCell"/>
</dbReference>
<dbReference type="GO" id="GO:0050480">
    <property type="term" value="F:imidazolonepropionase activity"/>
    <property type="evidence" value="ECO:0007669"/>
    <property type="project" value="UniProtKB-UniRule"/>
</dbReference>
<dbReference type="GO" id="GO:0005506">
    <property type="term" value="F:iron ion binding"/>
    <property type="evidence" value="ECO:0007669"/>
    <property type="project" value="UniProtKB-UniRule"/>
</dbReference>
<dbReference type="GO" id="GO:0008270">
    <property type="term" value="F:zinc ion binding"/>
    <property type="evidence" value="ECO:0007669"/>
    <property type="project" value="UniProtKB-UniRule"/>
</dbReference>
<dbReference type="GO" id="GO:0019556">
    <property type="term" value="P:L-histidine catabolic process to glutamate and formamide"/>
    <property type="evidence" value="ECO:0007669"/>
    <property type="project" value="UniProtKB-UniPathway"/>
</dbReference>
<dbReference type="GO" id="GO:0019557">
    <property type="term" value="P:L-histidine catabolic process to glutamate and formate"/>
    <property type="evidence" value="ECO:0007669"/>
    <property type="project" value="UniProtKB-UniPathway"/>
</dbReference>
<dbReference type="CDD" id="cd01296">
    <property type="entry name" value="Imidazolone-5PH"/>
    <property type="match status" value="1"/>
</dbReference>
<dbReference type="FunFam" id="3.20.20.140:FF:000007">
    <property type="entry name" value="Imidazolonepropionase"/>
    <property type="match status" value="1"/>
</dbReference>
<dbReference type="Gene3D" id="3.20.20.140">
    <property type="entry name" value="Metal-dependent hydrolases"/>
    <property type="match status" value="1"/>
</dbReference>
<dbReference type="Gene3D" id="2.30.40.10">
    <property type="entry name" value="Urease, subunit C, domain 1"/>
    <property type="match status" value="1"/>
</dbReference>
<dbReference type="HAMAP" id="MF_00372">
    <property type="entry name" value="HutI"/>
    <property type="match status" value="1"/>
</dbReference>
<dbReference type="InterPro" id="IPR006680">
    <property type="entry name" value="Amidohydro-rel"/>
</dbReference>
<dbReference type="InterPro" id="IPR005920">
    <property type="entry name" value="HutI"/>
</dbReference>
<dbReference type="InterPro" id="IPR011059">
    <property type="entry name" value="Metal-dep_hydrolase_composite"/>
</dbReference>
<dbReference type="InterPro" id="IPR032466">
    <property type="entry name" value="Metal_Hydrolase"/>
</dbReference>
<dbReference type="NCBIfam" id="TIGR01224">
    <property type="entry name" value="hutI"/>
    <property type="match status" value="1"/>
</dbReference>
<dbReference type="PANTHER" id="PTHR42752">
    <property type="entry name" value="IMIDAZOLONEPROPIONASE"/>
    <property type="match status" value="1"/>
</dbReference>
<dbReference type="PANTHER" id="PTHR42752:SF1">
    <property type="entry name" value="IMIDAZOLONEPROPIONASE-RELATED"/>
    <property type="match status" value="1"/>
</dbReference>
<dbReference type="Pfam" id="PF01979">
    <property type="entry name" value="Amidohydro_1"/>
    <property type="match status" value="1"/>
</dbReference>
<dbReference type="SUPFAM" id="SSF51338">
    <property type="entry name" value="Composite domain of metallo-dependent hydrolases"/>
    <property type="match status" value="1"/>
</dbReference>
<dbReference type="SUPFAM" id="SSF51556">
    <property type="entry name" value="Metallo-dependent hydrolases"/>
    <property type="match status" value="1"/>
</dbReference>
<keyword id="KW-0963">Cytoplasm</keyword>
<keyword id="KW-0369">Histidine metabolism</keyword>
<keyword id="KW-0378">Hydrolase</keyword>
<keyword id="KW-0408">Iron</keyword>
<keyword id="KW-0479">Metal-binding</keyword>
<keyword id="KW-1185">Reference proteome</keyword>
<keyword id="KW-0862">Zinc</keyword>
<protein>
    <recommendedName>
        <fullName evidence="1">Imidazolonepropionase</fullName>
        <ecNumber evidence="1">3.5.2.7</ecNumber>
    </recommendedName>
    <alternativeName>
        <fullName evidence="1">Imidazolone-5-propionate hydrolase</fullName>
    </alternativeName>
</protein>
<gene>
    <name evidence="1" type="primary">hutI</name>
    <name type="ordered locus">H16_A3015</name>
</gene>
<evidence type="ECO:0000255" key="1">
    <source>
        <dbReference type="HAMAP-Rule" id="MF_00372"/>
    </source>
</evidence>
<accession>Q0K7D1</accession>
<proteinExistence type="inferred from homology"/>